<keyword id="KW-0963">Cytoplasm</keyword>
<keyword id="KW-0217">Developmental protein</keyword>
<keyword id="KW-0238">DNA-binding</keyword>
<keyword id="KW-0539">Nucleus</keyword>
<keyword id="KW-1185">Reference proteome</keyword>
<keyword id="KW-0804">Transcription</keyword>
<keyword id="KW-0805">Transcription regulation</keyword>
<evidence type="ECO:0000250" key="1">
    <source>
        <dbReference type="UniProtKB" id="Q99593"/>
    </source>
</evidence>
<evidence type="ECO:0000255" key="2">
    <source>
        <dbReference type="PROSITE-ProRule" id="PRU00201"/>
    </source>
</evidence>
<evidence type="ECO:0000256" key="3">
    <source>
        <dbReference type="SAM" id="MobiDB-lite"/>
    </source>
</evidence>
<evidence type="ECO:0000269" key="4">
    <source>
    </source>
</evidence>
<evidence type="ECO:0000305" key="5"/>
<reference key="1">
    <citation type="journal article" date="1999" name="Development">
        <title>Tbx5 is essential for heart development.</title>
        <authorList>
            <person name="Horb M.E."/>
            <person name="Thomsen G.H."/>
        </authorList>
    </citation>
    <scope>NUCLEOTIDE SEQUENCE [MRNA]</scope>
    <scope>FUNCTION</scope>
    <scope>DEVELOPMENTAL STAGE</scope>
</reference>
<reference key="2">
    <citation type="journal article" date="2000" name="Mech. Dev.">
        <title>Conserved and divergent expression of T-box genes Tbx2-Tbx5 in Xenopus.</title>
        <authorList>
            <person name="Takabatake Y."/>
            <person name="Takabatake T."/>
            <person name="Takeshima K."/>
        </authorList>
    </citation>
    <scope>NUCLEOTIDE SEQUENCE [MRNA] OF 118-250</scope>
</reference>
<name>TBX5_XENLA</name>
<dbReference type="EMBL" id="AF133036">
    <property type="protein sequence ID" value="AAD23592.1"/>
    <property type="molecule type" value="mRNA"/>
</dbReference>
<dbReference type="EMBL" id="AB032944">
    <property type="protein sequence ID" value="BAA93084.1"/>
    <property type="molecule type" value="mRNA"/>
</dbReference>
<dbReference type="RefSeq" id="NP_001079170.1">
    <property type="nucleotide sequence ID" value="NM_001085701.2"/>
</dbReference>
<dbReference type="SMR" id="Q9W7C2"/>
<dbReference type="GeneID" id="373738"/>
<dbReference type="KEGG" id="xla:373738"/>
<dbReference type="CTD" id="373738"/>
<dbReference type="OrthoDB" id="7442607at2759"/>
<dbReference type="Proteomes" id="UP000186698">
    <property type="component" value="Chromosome 1L"/>
</dbReference>
<dbReference type="Bgee" id="373738">
    <property type="expression patterns" value="Expressed in heart and 3 other cell types or tissues"/>
</dbReference>
<dbReference type="GO" id="GO:0000785">
    <property type="term" value="C:chromatin"/>
    <property type="evidence" value="ECO:0000318"/>
    <property type="project" value="GO_Central"/>
</dbReference>
<dbReference type="GO" id="GO:0005737">
    <property type="term" value="C:cytoplasm"/>
    <property type="evidence" value="ECO:0000250"/>
    <property type="project" value="UniProtKB"/>
</dbReference>
<dbReference type="GO" id="GO:0005634">
    <property type="term" value="C:nucleus"/>
    <property type="evidence" value="ECO:0000250"/>
    <property type="project" value="UniProtKB"/>
</dbReference>
<dbReference type="GO" id="GO:0032991">
    <property type="term" value="C:protein-containing complex"/>
    <property type="evidence" value="ECO:0000250"/>
    <property type="project" value="UniProtKB"/>
</dbReference>
<dbReference type="GO" id="GO:0032993">
    <property type="term" value="C:protein-DNA complex"/>
    <property type="evidence" value="ECO:0000250"/>
    <property type="project" value="UniProtKB"/>
</dbReference>
<dbReference type="GO" id="GO:0003677">
    <property type="term" value="F:DNA binding"/>
    <property type="evidence" value="ECO:0000250"/>
    <property type="project" value="UniProtKB"/>
</dbReference>
<dbReference type="GO" id="GO:0003700">
    <property type="term" value="F:DNA-binding transcription factor activity"/>
    <property type="evidence" value="ECO:0000250"/>
    <property type="project" value="UniProtKB"/>
</dbReference>
<dbReference type="GO" id="GO:0000981">
    <property type="term" value="F:DNA-binding transcription factor activity, RNA polymerase II-specific"/>
    <property type="evidence" value="ECO:0000250"/>
    <property type="project" value="UniProtKB"/>
</dbReference>
<dbReference type="GO" id="GO:0000978">
    <property type="term" value="F:RNA polymerase II cis-regulatory region sequence-specific DNA binding"/>
    <property type="evidence" value="ECO:0000250"/>
    <property type="project" value="UniProtKB"/>
</dbReference>
<dbReference type="GO" id="GO:0043565">
    <property type="term" value="F:sequence-specific DNA binding"/>
    <property type="evidence" value="ECO:0000250"/>
    <property type="project" value="UniProtKB"/>
</dbReference>
<dbReference type="GO" id="GO:0048513">
    <property type="term" value="P:animal organ development"/>
    <property type="evidence" value="ECO:0000250"/>
    <property type="project" value="UniProtKB"/>
</dbReference>
<dbReference type="GO" id="GO:0003218">
    <property type="term" value="P:cardiac left ventricle formation"/>
    <property type="evidence" value="ECO:0000318"/>
    <property type="project" value="GO_Central"/>
</dbReference>
<dbReference type="GO" id="GO:0001708">
    <property type="term" value="P:cell fate specification"/>
    <property type="evidence" value="ECO:0000318"/>
    <property type="project" value="GO_Central"/>
</dbReference>
<dbReference type="GO" id="GO:0007267">
    <property type="term" value="P:cell-cell signaling"/>
    <property type="evidence" value="ECO:0000250"/>
    <property type="project" value="UniProtKB"/>
</dbReference>
<dbReference type="GO" id="GO:0035115">
    <property type="term" value="P:embryonic forelimb morphogenesis"/>
    <property type="evidence" value="ECO:0000250"/>
    <property type="project" value="UniProtKB"/>
</dbReference>
<dbReference type="GO" id="GO:0030326">
    <property type="term" value="P:embryonic limb morphogenesis"/>
    <property type="evidence" value="ECO:0000250"/>
    <property type="project" value="UniProtKB"/>
</dbReference>
<dbReference type="GO" id="GO:0007507">
    <property type="term" value="P:heart development"/>
    <property type="evidence" value="ECO:0000250"/>
    <property type="project" value="UniProtKB"/>
</dbReference>
<dbReference type="GO" id="GO:0060044">
    <property type="term" value="P:negative regulation of cardiac muscle cell proliferation"/>
    <property type="evidence" value="ECO:0000250"/>
    <property type="project" value="UniProtKB"/>
</dbReference>
<dbReference type="GO" id="GO:0030336">
    <property type="term" value="P:negative regulation of cell migration"/>
    <property type="evidence" value="ECO:0000250"/>
    <property type="project" value="UniProtKB"/>
</dbReference>
<dbReference type="GO" id="GO:0008285">
    <property type="term" value="P:negative regulation of cell population proliferation"/>
    <property type="evidence" value="ECO:0000250"/>
    <property type="project" value="UniProtKB"/>
</dbReference>
<dbReference type="GO" id="GO:0007389">
    <property type="term" value="P:pattern specification process"/>
    <property type="evidence" value="ECO:0000318"/>
    <property type="project" value="GO_Central"/>
</dbReference>
<dbReference type="GO" id="GO:0060039">
    <property type="term" value="P:pericardium development"/>
    <property type="evidence" value="ECO:0000250"/>
    <property type="project" value="UniProtKB"/>
</dbReference>
<dbReference type="GO" id="GO:0051891">
    <property type="term" value="P:positive regulation of cardioblast differentiation"/>
    <property type="evidence" value="ECO:0000250"/>
    <property type="project" value="UniProtKB"/>
</dbReference>
<dbReference type="GO" id="GO:0045893">
    <property type="term" value="P:positive regulation of DNA-templated transcription"/>
    <property type="evidence" value="ECO:0000250"/>
    <property type="project" value="UniProtKB"/>
</dbReference>
<dbReference type="GO" id="GO:0045944">
    <property type="term" value="P:positive regulation of transcription by RNA polymerase II"/>
    <property type="evidence" value="ECO:0000250"/>
    <property type="project" value="UniProtKB"/>
</dbReference>
<dbReference type="GO" id="GO:0006357">
    <property type="term" value="P:regulation of transcription by RNA polymerase II"/>
    <property type="evidence" value="ECO:0000318"/>
    <property type="project" value="GO_Central"/>
</dbReference>
<dbReference type="CDD" id="cd20189">
    <property type="entry name" value="T-box_TBX4_5-like"/>
    <property type="match status" value="1"/>
</dbReference>
<dbReference type="FunFam" id="2.60.40.820:FF:000005">
    <property type="entry name" value="T-box transcription factor TBX5"/>
    <property type="match status" value="1"/>
</dbReference>
<dbReference type="Gene3D" id="2.60.40.820">
    <property type="entry name" value="Transcription factor, T-box"/>
    <property type="match status" value="1"/>
</dbReference>
<dbReference type="InterPro" id="IPR008967">
    <property type="entry name" value="p53-like_TF_DNA-bd_sf"/>
</dbReference>
<dbReference type="InterPro" id="IPR046360">
    <property type="entry name" value="T-box_DNA-bd"/>
</dbReference>
<dbReference type="InterPro" id="IPR036960">
    <property type="entry name" value="T-box_sf"/>
</dbReference>
<dbReference type="InterPro" id="IPR001699">
    <property type="entry name" value="TF_T-box"/>
</dbReference>
<dbReference type="InterPro" id="IPR018186">
    <property type="entry name" value="TF_T-box_CS"/>
</dbReference>
<dbReference type="PANTHER" id="PTHR11267">
    <property type="entry name" value="T-BOX PROTEIN-RELATED"/>
    <property type="match status" value="1"/>
</dbReference>
<dbReference type="PANTHER" id="PTHR11267:SF28">
    <property type="entry name" value="T-BOX TRANSCRIPTION FACTOR TBX5"/>
    <property type="match status" value="1"/>
</dbReference>
<dbReference type="Pfam" id="PF00907">
    <property type="entry name" value="T-box"/>
    <property type="match status" value="1"/>
</dbReference>
<dbReference type="PRINTS" id="PR00937">
    <property type="entry name" value="TBOX"/>
</dbReference>
<dbReference type="SMART" id="SM00425">
    <property type="entry name" value="TBOX"/>
    <property type="match status" value="1"/>
</dbReference>
<dbReference type="SUPFAM" id="SSF49417">
    <property type="entry name" value="p53-like transcription factors"/>
    <property type="match status" value="1"/>
</dbReference>
<dbReference type="PROSITE" id="PS01283">
    <property type="entry name" value="TBOX_1"/>
    <property type="match status" value="1"/>
</dbReference>
<dbReference type="PROSITE" id="PS01264">
    <property type="entry name" value="TBOX_2"/>
    <property type="match status" value="1"/>
</dbReference>
<dbReference type="PROSITE" id="PS50252">
    <property type="entry name" value="TBOX_3"/>
    <property type="match status" value="1"/>
</dbReference>
<protein>
    <recommendedName>
        <fullName>T-box transcription factor TBX5</fullName>
        <shortName>T-box protein 5</shortName>
    </recommendedName>
</protein>
<accession>Q9W7C2</accession>
<accession>Q9IBC5</accession>
<sequence length="519" mass="58081">MADTEEAYGMPDTPVEAEPKELQCEPKQDNQLGASSKTPTSPPAAFTQQGMEGIKVFLHERELWLKFHEVGTEMIITKAGRRMFPSYKVKVTGLNPKTKYILLMDIVPADDHRYKFADNKWSVTGKAEPAMPGRLYVHPDSPATGAHWMRQLVSFQKLKLTNNHLDPFGHIILNSMHKYQPRLHIVKADENNGFGSKNTAFCTHVFSETDFIAVTSYQNHKITQLKIENNPFAKGFRGSDDMELHRMSRMQSKEYPVVPRSTVRQKVSSNHSPFSQETRNITGSSTLNSQYQCENGVSSTSQDLLPSSSAYTSLPHESGTIYHCTKRKVSEEPAEHSYKKPYMDTSPSEEDPFYRSGYPQPSSSSSSTTSFRTESAQRQACMYASSAPATEPVPSIEDISCNSWSSVPSYSSCTVGGGMQPMERLPYQHFSAHFTSSSLMPRLSNHAGTQPSDSHSMFQHQSSHQAIVRQCNPQSGLQQSSALQPTEFLYPHSVPRTISPHQYHSVHGVGMVPDWNENS</sequence>
<proteinExistence type="evidence at transcript level"/>
<gene>
    <name type="primary">tbx5</name>
</gene>
<feature type="chain" id="PRO_0000262469" description="T-box transcription factor TBX5">
    <location>
        <begin position="1"/>
        <end position="519"/>
    </location>
</feature>
<feature type="DNA-binding region" description="T-box" evidence="1 2">
    <location>
        <begin position="63"/>
        <end position="238"/>
    </location>
</feature>
<feature type="region of interest" description="Disordered" evidence="3">
    <location>
        <begin position="1"/>
        <end position="46"/>
    </location>
</feature>
<feature type="region of interest" description="Disordered" evidence="3">
    <location>
        <begin position="254"/>
        <end position="282"/>
    </location>
</feature>
<feature type="region of interest" description="Disordered" evidence="3">
    <location>
        <begin position="293"/>
        <end position="312"/>
    </location>
</feature>
<feature type="region of interest" description="Disordered" evidence="3">
    <location>
        <begin position="326"/>
        <end position="372"/>
    </location>
</feature>
<feature type="compositionally biased region" description="Basic and acidic residues" evidence="3">
    <location>
        <begin position="17"/>
        <end position="28"/>
    </location>
</feature>
<feature type="compositionally biased region" description="Polar residues" evidence="3">
    <location>
        <begin position="29"/>
        <end position="39"/>
    </location>
</feature>
<feature type="compositionally biased region" description="Polar residues" evidence="3">
    <location>
        <begin position="262"/>
        <end position="282"/>
    </location>
</feature>
<feature type="compositionally biased region" description="Low complexity" evidence="3">
    <location>
        <begin position="298"/>
        <end position="309"/>
    </location>
</feature>
<feature type="compositionally biased region" description="Basic and acidic residues" evidence="3">
    <location>
        <begin position="328"/>
        <end position="342"/>
    </location>
</feature>
<feature type="sequence conflict" description="In Ref. 2; BAA93084." evidence="5" ref="2">
    <original>A</original>
    <variation>T</variation>
    <location>
        <position position="146"/>
    </location>
</feature>
<feature type="sequence conflict" description="In Ref. 2; BAA93084." evidence="5" ref="2">
    <original>D</original>
    <variation>A</variation>
    <location>
        <position position="210"/>
    </location>
</feature>
<comment type="function">
    <text evidence="1 4">DNA-binding protein that regulates the transcription of several genes and is involved in heart development and limb pattern formation (PubMed:10079235). May bind to the core DNA motif of promoters (By similarity).</text>
</comment>
<comment type="subunit">
    <text evidence="1">Monomer. Homodimer (via the T-box); binds DNA as homodimer.</text>
</comment>
<comment type="subcellular location">
    <subcellularLocation>
        <location evidence="1 2">Nucleus</location>
    </subcellularLocation>
    <subcellularLocation>
        <location evidence="1">Cytoplasm</location>
    </subcellularLocation>
    <text evidence="1">Shuttles between the cytoplasm and the nucleus.</text>
</comment>
<comment type="developmental stage">
    <text evidence="4">Expressed exclusively in the developing heart and eye. Expression begins within a subset of cardioblasts at neurula stages and continues within the heart during morphogenesis at later tadpole stages. Within the heart tube, expressed in all but the most anterior domain, the bulbus cordis.</text>
</comment>
<comment type="domain">
    <text evidence="1">The T-Box domain binds to double-stranded DNA.</text>
</comment>
<organism>
    <name type="scientific">Xenopus laevis</name>
    <name type="common">African clawed frog</name>
    <dbReference type="NCBI Taxonomy" id="8355"/>
    <lineage>
        <taxon>Eukaryota</taxon>
        <taxon>Metazoa</taxon>
        <taxon>Chordata</taxon>
        <taxon>Craniata</taxon>
        <taxon>Vertebrata</taxon>
        <taxon>Euteleostomi</taxon>
        <taxon>Amphibia</taxon>
        <taxon>Batrachia</taxon>
        <taxon>Anura</taxon>
        <taxon>Pipoidea</taxon>
        <taxon>Pipidae</taxon>
        <taxon>Xenopodinae</taxon>
        <taxon>Xenopus</taxon>
        <taxon>Xenopus</taxon>
    </lineage>
</organism>